<gene>
    <name type="primary">srrA</name>
    <name type="ordered locus">SAR1568</name>
</gene>
<comment type="function">
    <text evidence="2 3">Member of the two-component regulatory system SrrA/SrrB, which is involved in the global regulation of staphylococcal virulence factors in response to environmental oxygen levels as well as biofilm formation. Also plays an essential role in host-derived nitric oxide resistance by regulating hmp/flavohemoglobin, an enzyme that detoxifies nitric oxide by converting it to nitrate (By similarity). Functions as a transcription regulator by direct binding to promoter regions of target genes (By similarity).</text>
</comment>
<comment type="subcellular location">
    <subcellularLocation>
        <location evidence="1">Cytoplasm</location>
    </subcellularLocation>
</comment>
<comment type="PTM">
    <text evidence="1">Phosphorylated by SrrB.</text>
</comment>
<comment type="sequence caution" evidence="6">
    <conflict type="erroneous initiation">
        <sequence resource="EMBL-CDS" id="CAG40564"/>
    </conflict>
</comment>
<organism>
    <name type="scientific">Staphylococcus aureus (strain MRSA252)</name>
    <dbReference type="NCBI Taxonomy" id="282458"/>
    <lineage>
        <taxon>Bacteria</taxon>
        <taxon>Bacillati</taxon>
        <taxon>Bacillota</taxon>
        <taxon>Bacilli</taxon>
        <taxon>Bacillales</taxon>
        <taxon>Staphylococcaceae</taxon>
        <taxon>Staphylococcus</taxon>
    </lineage>
</organism>
<sequence>MSNEILIVDDEDRIRRLLKMYLERESFEIHEASNGQEAYELAMENNYACILLDLMLPEMDGIQVATKLREHKQTPIIMLTAKGEETNRVEGFESGADDYIVKPFSPREVVLRVKALLRRTQSTTVEQSEPHARDVIEFKHLEIDNDAHRVLADNQEVNLTPKEYELLIYLAKTPNKVFDREQLLKEVWHYEFYGDLRTVDTHVKRLREKLNRVSSEAAHMIQTVWGVGYKFEVKSNDEPAK</sequence>
<protein>
    <recommendedName>
        <fullName>Transcriptional regulatory protein SrrA</fullName>
    </recommendedName>
    <alternativeName>
        <fullName>Staphylococcal respiratory response protein A</fullName>
    </alternativeName>
</protein>
<keyword id="KW-0010">Activator</keyword>
<keyword id="KW-0963">Cytoplasm</keyword>
<keyword id="KW-0238">DNA-binding</keyword>
<keyword id="KW-0597">Phosphoprotein</keyword>
<keyword id="KW-0678">Repressor</keyword>
<keyword id="KW-0804">Transcription</keyword>
<keyword id="KW-0805">Transcription regulation</keyword>
<keyword id="KW-0902">Two-component regulatory system</keyword>
<evidence type="ECO:0000250" key="1"/>
<evidence type="ECO:0000250" key="2">
    <source>
        <dbReference type="UniProtKB" id="Q5HFT0"/>
    </source>
</evidence>
<evidence type="ECO:0000250" key="3">
    <source>
        <dbReference type="UniProtKB" id="Q9L524"/>
    </source>
</evidence>
<evidence type="ECO:0000255" key="4">
    <source>
        <dbReference type="PROSITE-ProRule" id="PRU00169"/>
    </source>
</evidence>
<evidence type="ECO:0000255" key="5">
    <source>
        <dbReference type="PROSITE-ProRule" id="PRU01091"/>
    </source>
</evidence>
<evidence type="ECO:0000305" key="6"/>
<name>SRRA_STAAR</name>
<dbReference type="EMBL" id="BX571856">
    <property type="protein sequence ID" value="CAG40564.1"/>
    <property type="status" value="ALT_INIT"/>
    <property type="molecule type" value="Genomic_DNA"/>
</dbReference>
<dbReference type="RefSeq" id="WP_000064078.1">
    <property type="nucleotide sequence ID" value="NC_002952.2"/>
</dbReference>
<dbReference type="SMR" id="Q6GGK6"/>
<dbReference type="GeneID" id="98345856"/>
<dbReference type="KEGG" id="sar:SAR1568"/>
<dbReference type="HOGENOM" id="CLU_000445_30_4_9"/>
<dbReference type="Proteomes" id="UP000000596">
    <property type="component" value="Chromosome"/>
</dbReference>
<dbReference type="GO" id="GO:0005829">
    <property type="term" value="C:cytosol"/>
    <property type="evidence" value="ECO:0007669"/>
    <property type="project" value="TreeGrafter"/>
</dbReference>
<dbReference type="GO" id="GO:0032993">
    <property type="term" value="C:protein-DNA complex"/>
    <property type="evidence" value="ECO:0007669"/>
    <property type="project" value="TreeGrafter"/>
</dbReference>
<dbReference type="GO" id="GO:0000156">
    <property type="term" value="F:phosphorelay response regulator activity"/>
    <property type="evidence" value="ECO:0007669"/>
    <property type="project" value="TreeGrafter"/>
</dbReference>
<dbReference type="GO" id="GO:0000976">
    <property type="term" value="F:transcription cis-regulatory region binding"/>
    <property type="evidence" value="ECO:0007669"/>
    <property type="project" value="TreeGrafter"/>
</dbReference>
<dbReference type="GO" id="GO:0006355">
    <property type="term" value="P:regulation of DNA-templated transcription"/>
    <property type="evidence" value="ECO:0007669"/>
    <property type="project" value="InterPro"/>
</dbReference>
<dbReference type="CDD" id="cd17574">
    <property type="entry name" value="REC_OmpR"/>
    <property type="match status" value="1"/>
</dbReference>
<dbReference type="CDD" id="cd00383">
    <property type="entry name" value="trans_reg_C"/>
    <property type="match status" value="1"/>
</dbReference>
<dbReference type="FunFam" id="3.40.50.2300:FF:000001">
    <property type="entry name" value="DNA-binding response regulator PhoB"/>
    <property type="match status" value="1"/>
</dbReference>
<dbReference type="FunFam" id="1.10.10.10:FF:000018">
    <property type="entry name" value="DNA-binding response regulator ResD"/>
    <property type="match status" value="1"/>
</dbReference>
<dbReference type="Gene3D" id="3.40.50.2300">
    <property type="match status" value="1"/>
</dbReference>
<dbReference type="Gene3D" id="6.10.250.690">
    <property type="match status" value="1"/>
</dbReference>
<dbReference type="Gene3D" id="1.10.10.10">
    <property type="entry name" value="Winged helix-like DNA-binding domain superfamily/Winged helix DNA-binding domain"/>
    <property type="match status" value="1"/>
</dbReference>
<dbReference type="InterPro" id="IPR011006">
    <property type="entry name" value="CheY-like_superfamily"/>
</dbReference>
<dbReference type="InterPro" id="IPR001867">
    <property type="entry name" value="OmpR/PhoB-type_DNA-bd"/>
</dbReference>
<dbReference type="InterPro" id="IPR001789">
    <property type="entry name" value="Sig_transdc_resp-reg_receiver"/>
</dbReference>
<dbReference type="InterPro" id="IPR039420">
    <property type="entry name" value="WalR-like"/>
</dbReference>
<dbReference type="InterPro" id="IPR036388">
    <property type="entry name" value="WH-like_DNA-bd_sf"/>
</dbReference>
<dbReference type="PANTHER" id="PTHR48111">
    <property type="entry name" value="REGULATOR OF RPOS"/>
    <property type="match status" value="1"/>
</dbReference>
<dbReference type="PANTHER" id="PTHR48111:SF44">
    <property type="entry name" value="TRANSCRIPTIONAL REGULATORY PROTEIN RESD"/>
    <property type="match status" value="1"/>
</dbReference>
<dbReference type="Pfam" id="PF00072">
    <property type="entry name" value="Response_reg"/>
    <property type="match status" value="1"/>
</dbReference>
<dbReference type="Pfam" id="PF00486">
    <property type="entry name" value="Trans_reg_C"/>
    <property type="match status" value="1"/>
</dbReference>
<dbReference type="SMART" id="SM00448">
    <property type="entry name" value="REC"/>
    <property type="match status" value="1"/>
</dbReference>
<dbReference type="SMART" id="SM00862">
    <property type="entry name" value="Trans_reg_C"/>
    <property type="match status" value="1"/>
</dbReference>
<dbReference type="SUPFAM" id="SSF52172">
    <property type="entry name" value="CheY-like"/>
    <property type="match status" value="1"/>
</dbReference>
<dbReference type="PROSITE" id="PS51755">
    <property type="entry name" value="OMPR_PHOB"/>
    <property type="match status" value="1"/>
</dbReference>
<dbReference type="PROSITE" id="PS50110">
    <property type="entry name" value="RESPONSE_REGULATORY"/>
    <property type="match status" value="1"/>
</dbReference>
<feature type="chain" id="PRO_0000081251" description="Transcriptional regulatory protein SrrA">
    <location>
        <begin position="1"/>
        <end position="241"/>
    </location>
</feature>
<feature type="domain" description="Response regulatory" evidence="4">
    <location>
        <begin position="4"/>
        <end position="117"/>
    </location>
</feature>
<feature type="DNA-binding region" description="OmpR/PhoB-type" evidence="5">
    <location>
        <begin position="133"/>
        <end position="233"/>
    </location>
</feature>
<feature type="modified residue" description="4-aspartylphosphate" evidence="4">
    <location>
        <position position="53"/>
    </location>
</feature>
<proteinExistence type="inferred from homology"/>
<accession>Q6GGK6</accession>
<reference key="1">
    <citation type="journal article" date="2004" name="Proc. Natl. Acad. Sci. U.S.A.">
        <title>Complete genomes of two clinical Staphylococcus aureus strains: evidence for the rapid evolution of virulence and drug resistance.</title>
        <authorList>
            <person name="Holden M.T.G."/>
            <person name="Feil E.J."/>
            <person name="Lindsay J.A."/>
            <person name="Peacock S.J."/>
            <person name="Day N.P.J."/>
            <person name="Enright M.C."/>
            <person name="Foster T.J."/>
            <person name="Moore C.E."/>
            <person name="Hurst L."/>
            <person name="Atkin R."/>
            <person name="Barron A."/>
            <person name="Bason N."/>
            <person name="Bentley S.D."/>
            <person name="Chillingworth C."/>
            <person name="Chillingworth T."/>
            <person name="Churcher C."/>
            <person name="Clark L."/>
            <person name="Corton C."/>
            <person name="Cronin A."/>
            <person name="Doggett J."/>
            <person name="Dowd L."/>
            <person name="Feltwell T."/>
            <person name="Hance Z."/>
            <person name="Harris B."/>
            <person name="Hauser H."/>
            <person name="Holroyd S."/>
            <person name="Jagels K."/>
            <person name="James K.D."/>
            <person name="Lennard N."/>
            <person name="Line A."/>
            <person name="Mayes R."/>
            <person name="Moule S."/>
            <person name="Mungall K."/>
            <person name="Ormond D."/>
            <person name="Quail M.A."/>
            <person name="Rabbinowitsch E."/>
            <person name="Rutherford K.M."/>
            <person name="Sanders M."/>
            <person name="Sharp S."/>
            <person name="Simmonds M."/>
            <person name="Stevens K."/>
            <person name="Whitehead S."/>
            <person name="Barrell B.G."/>
            <person name="Spratt B.G."/>
            <person name="Parkhill J."/>
        </authorList>
    </citation>
    <scope>NUCLEOTIDE SEQUENCE [LARGE SCALE GENOMIC DNA]</scope>
    <source>
        <strain>MRSA252</strain>
    </source>
</reference>